<organism>
    <name type="scientific">Streptococcus agalactiae serotype Ia (strain ATCC 27591 / A909 / CDC SS700)</name>
    <dbReference type="NCBI Taxonomy" id="205921"/>
    <lineage>
        <taxon>Bacteria</taxon>
        <taxon>Bacillati</taxon>
        <taxon>Bacillota</taxon>
        <taxon>Bacilli</taxon>
        <taxon>Lactobacillales</taxon>
        <taxon>Streptococcaceae</taxon>
        <taxon>Streptococcus</taxon>
    </lineage>
</organism>
<dbReference type="EMBL" id="CP000114">
    <property type="protein sequence ID" value="ABA44405.1"/>
    <property type="molecule type" value="Genomic_DNA"/>
</dbReference>
<dbReference type="RefSeq" id="WP_000160205.1">
    <property type="nucleotide sequence ID" value="NC_007432.1"/>
</dbReference>
<dbReference type="SMR" id="Q3K3W9"/>
<dbReference type="GeneID" id="66885018"/>
<dbReference type="KEGG" id="sak:SAK_0091"/>
<dbReference type="HOGENOM" id="CLU_044142_4_1_9"/>
<dbReference type="GO" id="GO:0022625">
    <property type="term" value="C:cytosolic large ribosomal subunit"/>
    <property type="evidence" value="ECO:0007669"/>
    <property type="project" value="TreeGrafter"/>
</dbReference>
<dbReference type="GO" id="GO:0019843">
    <property type="term" value="F:rRNA binding"/>
    <property type="evidence" value="ECO:0007669"/>
    <property type="project" value="UniProtKB-UniRule"/>
</dbReference>
<dbReference type="GO" id="GO:0003735">
    <property type="term" value="F:structural constituent of ribosome"/>
    <property type="evidence" value="ECO:0007669"/>
    <property type="project" value="InterPro"/>
</dbReference>
<dbReference type="GO" id="GO:0006412">
    <property type="term" value="P:translation"/>
    <property type="evidence" value="ECO:0007669"/>
    <property type="project" value="UniProtKB-UniRule"/>
</dbReference>
<dbReference type="FunFam" id="2.40.30.10:FF:000004">
    <property type="entry name" value="50S ribosomal protein L3"/>
    <property type="match status" value="1"/>
</dbReference>
<dbReference type="FunFam" id="3.30.160.810:FF:000002">
    <property type="entry name" value="50S ribosomal protein L3"/>
    <property type="match status" value="1"/>
</dbReference>
<dbReference type="Gene3D" id="3.30.160.810">
    <property type="match status" value="1"/>
</dbReference>
<dbReference type="Gene3D" id="2.40.30.10">
    <property type="entry name" value="Translation factors"/>
    <property type="match status" value="1"/>
</dbReference>
<dbReference type="HAMAP" id="MF_01325_B">
    <property type="entry name" value="Ribosomal_uL3_B"/>
    <property type="match status" value="1"/>
</dbReference>
<dbReference type="InterPro" id="IPR000597">
    <property type="entry name" value="Ribosomal_uL3"/>
</dbReference>
<dbReference type="InterPro" id="IPR019927">
    <property type="entry name" value="Ribosomal_uL3_bac/org-type"/>
</dbReference>
<dbReference type="InterPro" id="IPR019926">
    <property type="entry name" value="Ribosomal_uL3_CS"/>
</dbReference>
<dbReference type="InterPro" id="IPR009000">
    <property type="entry name" value="Transl_B-barrel_sf"/>
</dbReference>
<dbReference type="NCBIfam" id="TIGR03625">
    <property type="entry name" value="L3_bact"/>
    <property type="match status" value="1"/>
</dbReference>
<dbReference type="PANTHER" id="PTHR11229">
    <property type="entry name" value="50S RIBOSOMAL PROTEIN L3"/>
    <property type="match status" value="1"/>
</dbReference>
<dbReference type="PANTHER" id="PTHR11229:SF16">
    <property type="entry name" value="LARGE RIBOSOMAL SUBUNIT PROTEIN UL3C"/>
    <property type="match status" value="1"/>
</dbReference>
<dbReference type="Pfam" id="PF00297">
    <property type="entry name" value="Ribosomal_L3"/>
    <property type="match status" value="1"/>
</dbReference>
<dbReference type="SUPFAM" id="SSF50447">
    <property type="entry name" value="Translation proteins"/>
    <property type="match status" value="1"/>
</dbReference>
<dbReference type="PROSITE" id="PS00474">
    <property type="entry name" value="RIBOSOMAL_L3"/>
    <property type="match status" value="1"/>
</dbReference>
<protein>
    <recommendedName>
        <fullName evidence="1">Large ribosomal subunit protein uL3</fullName>
    </recommendedName>
    <alternativeName>
        <fullName evidence="3">50S ribosomal protein L3</fullName>
    </alternativeName>
</protein>
<sequence length="208" mass="22426">MTKGILGKKVGMTQIFTESGEFIPVTVIEATPNVVLQVKTVETDGYEAVQVGFDDKREVLSNKPAKGHVAKANTAPKRFIREFKNIEGLEVGAELSVEQFEAGDVVDVTGTSKGKGFQGVIKRHGQSRGPMAHGSRYHRRPGSMGPVAPNRVFKNKRLAGRMGGNRVTVQNLEIVQVIPEKNVVLIKGNVPGAKKSLITIKSAVKAAK</sequence>
<gene>
    <name evidence="1" type="primary">rplC</name>
    <name type="ordered locus">SAK_0091</name>
</gene>
<proteinExistence type="inferred from homology"/>
<name>RL3_STRA1</name>
<feature type="chain" id="PRO_0000241416" description="Large ribosomal subunit protein uL3">
    <location>
        <begin position="1"/>
        <end position="208"/>
    </location>
</feature>
<feature type="region of interest" description="Disordered" evidence="2">
    <location>
        <begin position="116"/>
        <end position="148"/>
    </location>
</feature>
<comment type="function">
    <text evidence="1">One of the primary rRNA binding proteins, it binds directly near the 3'-end of the 23S rRNA, where it nucleates assembly of the 50S subunit.</text>
</comment>
<comment type="subunit">
    <text evidence="1">Part of the 50S ribosomal subunit. Forms a cluster with proteins L14 and L19.</text>
</comment>
<comment type="similarity">
    <text evidence="1">Belongs to the universal ribosomal protein uL3 family.</text>
</comment>
<accession>Q3K3W9</accession>
<keyword id="KW-0687">Ribonucleoprotein</keyword>
<keyword id="KW-0689">Ribosomal protein</keyword>
<keyword id="KW-0694">RNA-binding</keyword>
<keyword id="KW-0699">rRNA-binding</keyword>
<reference key="1">
    <citation type="journal article" date="2005" name="Proc. Natl. Acad. Sci. U.S.A.">
        <title>Genome analysis of multiple pathogenic isolates of Streptococcus agalactiae: implications for the microbial 'pan-genome'.</title>
        <authorList>
            <person name="Tettelin H."/>
            <person name="Masignani V."/>
            <person name="Cieslewicz M.J."/>
            <person name="Donati C."/>
            <person name="Medini D."/>
            <person name="Ward N.L."/>
            <person name="Angiuoli S.V."/>
            <person name="Crabtree J."/>
            <person name="Jones A.L."/>
            <person name="Durkin A.S."/>
            <person name="DeBoy R.T."/>
            <person name="Davidsen T.M."/>
            <person name="Mora M."/>
            <person name="Scarselli M."/>
            <person name="Margarit y Ros I."/>
            <person name="Peterson J.D."/>
            <person name="Hauser C.R."/>
            <person name="Sundaram J.P."/>
            <person name="Nelson W.C."/>
            <person name="Madupu R."/>
            <person name="Brinkac L.M."/>
            <person name="Dodson R.J."/>
            <person name="Rosovitz M.J."/>
            <person name="Sullivan S.A."/>
            <person name="Daugherty S.C."/>
            <person name="Haft D.H."/>
            <person name="Selengut J."/>
            <person name="Gwinn M.L."/>
            <person name="Zhou L."/>
            <person name="Zafar N."/>
            <person name="Khouri H."/>
            <person name="Radune D."/>
            <person name="Dimitrov G."/>
            <person name="Watkins K."/>
            <person name="O'Connor K.J."/>
            <person name="Smith S."/>
            <person name="Utterback T.R."/>
            <person name="White O."/>
            <person name="Rubens C.E."/>
            <person name="Grandi G."/>
            <person name="Madoff L.C."/>
            <person name="Kasper D.L."/>
            <person name="Telford J.L."/>
            <person name="Wessels M.R."/>
            <person name="Rappuoli R."/>
            <person name="Fraser C.M."/>
        </authorList>
    </citation>
    <scope>NUCLEOTIDE SEQUENCE [LARGE SCALE GENOMIC DNA]</scope>
    <source>
        <strain>ATCC 27591 / A909 / CDC SS700</strain>
    </source>
</reference>
<evidence type="ECO:0000255" key="1">
    <source>
        <dbReference type="HAMAP-Rule" id="MF_01325"/>
    </source>
</evidence>
<evidence type="ECO:0000256" key="2">
    <source>
        <dbReference type="SAM" id="MobiDB-lite"/>
    </source>
</evidence>
<evidence type="ECO:0000305" key="3"/>